<feature type="chain" id="PRO_1000021523" description="Hydroxyethylthiazole kinase">
    <location>
        <begin position="1"/>
        <end position="267"/>
    </location>
</feature>
<feature type="binding site" evidence="1">
    <location>
        <position position="46"/>
    </location>
    <ligand>
        <name>substrate</name>
    </ligand>
</feature>
<feature type="binding site" evidence="1">
    <location>
        <position position="122"/>
    </location>
    <ligand>
        <name>ATP</name>
        <dbReference type="ChEBI" id="CHEBI:30616"/>
    </ligand>
</feature>
<feature type="binding site" evidence="1">
    <location>
        <position position="168"/>
    </location>
    <ligand>
        <name>ATP</name>
        <dbReference type="ChEBI" id="CHEBI:30616"/>
    </ligand>
</feature>
<feature type="binding site" evidence="1">
    <location>
        <position position="195"/>
    </location>
    <ligand>
        <name>substrate</name>
    </ligand>
</feature>
<organism>
    <name type="scientific">Moorella thermoacetica (strain ATCC 39073 / JCM 9320)</name>
    <dbReference type="NCBI Taxonomy" id="264732"/>
    <lineage>
        <taxon>Bacteria</taxon>
        <taxon>Bacillati</taxon>
        <taxon>Bacillota</taxon>
        <taxon>Clostridia</taxon>
        <taxon>Moorellales</taxon>
        <taxon>Moorellaceae</taxon>
        <taxon>Moorella</taxon>
    </lineage>
</organism>
<keyword id="KW-0067">ATP-binding</keyword>
<keyword id="KW-0418">Kinase</keyword>
<keyword id="KW-0460">Magnesium</keyword>
<keyword id="KW-0479">Metal-binding</keyword>
<keyword id="KW-0547">Nucleotide-binding</keyword>
<keyword id="KW-0784">Thiamine biosynthesis</keyword>
<keyword id="KW-0808">Transferase</keyword>
<proteinExistence type="inferred from homology"/>
<sequence length="267" mass="27779">MNWGEQVASRRQRVHEQRPLVHHITNLVVTNLTANVTLAIGASPVMAYAREEVADMARLAQAVVLNMGTLTGDVVEAMLLAGKAANNAGIPVVFDPVGAGATPFRTRTAQKIIKELHIDILRGNASEIASIGGFGGHTKGVDAAGAPARVAEMVKQVARDLNTVVAVTGATDYISDGERLIAVDNGHPLLTFVTGTGCSATSIIAAFRAVEEDGVTASTAALAYYGLAAERAAAVSQGPASFQVALLDTLYNLAGEELARGVKIRLL</sequence>
<protein>
    <recommendedName>
        <fullName evidence="1">Hydroxyethylthiazole kinase</fullName>
        <ecNumber evidence="1">2.7.1.50</ecNumber>
    </recommendedName>
    <alternativeName>
        <fullName evidence="1">4-methyl-5-beta-hydroxyethylthiazole kinase</fullName>
        <shortName evidence="1">TH kinase</shortName>
        <shortName evidence="1">Thz kinase</shortName>
    </alternativeName>
</protein>
<reference key="1">
    <citation type="journal article" date="2008" name="Environ. Microbiol.">
        <title>The complete genome sequence of Moorella thermoacetica (f. Clostridium thermoaceticum).</title>
        <authorList>
            <person name="Pierce E."/>
            <person name="Xie G."/>
            <person name="Barabote R.D."/>
            <person name="Saunders E."/>
            <person name="Han C.S."/>
            <person name="Detter J.C."/>
            <person name="Richardson P."/>
            <person name="Brettin T.S."/>
            <person name="Das A."/>
            <person name="Ljungdahl L.G."/>
            <person name="Ragsdale S.W."/>
        </authorList>
    </citation>
    <scope>NUCLEOTIDE SEQUENCE [LARGE SCALE GENOMIC DNA]</scope>
    <source>
        <strain>ATCC 39073 / JCM 9320</strain>
    </source>
</reference>
<name>THIM_MOOTA</name>
<dbReference type="EC" id="2.7.1.50" evidence="1"/>
<dbReference type="EMBL" id="CP000232">
    <property type="protein sequence ID" value="ABC20313.1"/>
    <property type="molecule type" value="Genomic_DNA"/>
</dbReference>
<dbReference type="RefSeq" id="YP_430856.1">
    <property type="nucleotide sequence ID" value="NC_007644.1"/>
</dbReference>
<dbReference type="SMR" id="Q2RGX6"/>
<dbReference type="STRING" id="264732.Moth_2017"/>
<dbReference type="EnsemblBacteria" id="ABC20313">
    <property type="protein sequence ID" value="ABC20313"/>
    <property type="gene ID" value="Moth_2017"/>
</dbReference>
<dbReference type="KEGG" id="mta:Moth_2017"/>
<dbReference type="PATRIC" id="fig|264732.11.peg.2189"/>
<dbReference type="eggNOG" id="COG2145">
    <property type="taxonomic scope" value="Bacteria"/>
</dbReference>
<dbReference type="HOGENOM" id="CLU_019943_0_1_9"/>
<dbReference type="OrthoDB" id="9778146at2"/>
<dbReference type="UniPathway" id="UPA00060">
    <property type="reaction ID" value="UER00139"/>
</dbReference>
<dbReference type="GO" id="GO:0005524">
    <property type="term" value="F:ATP binding"/>
    <property type="evidence" value="ECO:0007669"/>
    <property type="project" value="UniProtKB-UniRule"/>
</dbReference>
<dbReference type="GO" id="GO:0004417">
    <property type="term" value="F:hydroxyethylthiazole kinase activity"/>
    <property type="evidence" value="ECO:0007669"/>
    <property type="project" value="UniProtKB-UniRule"/>
</dbReference>
<dbReference type="GO" id="GO:0000287">
    <property type="term" value="F:magnesium ion binding"/>
    <property type="evidence" value="ECO:0007669"/>
    <property type="project" value="UniProtKB-UniRule"/>
</dbReference>
<dbReference type="GO" id="GO:0009228">
    <property type="term" value="P:thiamine biosynthetic process"/>
    <property type="evidence" value="ECO:0007669"/>
    <property type="project" value="UniProtKB-KW"/>
</dbReference>
<dbReference type="GO" id="GO:0009229">
    <property type="term" value="P:thiamine diphosphate biosynthetic process"/>
    <property type="evidence" value="ECO:0007669"/>
    <property type="project" value="UniProtKB-UniRule"/>
</dbReference>
<dbReference type="CDD" id="cd01170">
    <property type="entry name" value="THZ_kinase"/>
    <property type="match status" value="1"/>
</dbReference>
<dbReference type="Gene3D" id="3.40.1190.20">
    <property type="match status" value="1"/>
</dbReference>
<dbReference type="HAMAP" id="MF_00228">
    <property type="entry name" value="Thz_kinase"/>
    <property type="match status" value="1"/>
</dbReference>
<dbReference type="InterPro" id="IPR000417">
    <property type="entry name" value="Hyethyz_kinase"/>
</dbReference>
<dbReference type="InterPro" id="IPR029056">
    <property type="entry name" value="Ribokinase-like"/>
</dbReference>
<dbReference type="NCBIfam" id="NF006830">
    <property type="entry name" value="PRK09355.1"/>
    <property type="match status" value="1"/>
</dbReference>
<dbReference type="NCBIfam" id="TIGR00694">
    <property type="entry name" value="thiM"/>
    <property type="match status" value="1"/>
</dbReference>
<dbReference type="Pfam" id="PF02110">
    <property type="entry name" value="HK"/>
    <property type="match status" value="1"/>
</dbReference>
<dbReference type="PIRSF" id="PIRSF000513">
    <property type="entry name" value="Thz_kinase"/>
    <property type="match status" value="1"/>
</dbReference>
<dbReference type="PRINTS" id="PR01099">
    <property type="entry name" value="HYETHTZKNASE"/>
</dbReference>
<dbReference type="SUPFAM" id="SSF53613">
    <property type="entry name" value="Ribokinase-like"/>
    <property type="match status" value="1"/>
</dbReference>
<evidence type="ECO:0000255" key="1">
    <source>
        <dbReference type="HAMAP-Rule" id="MF_00228"/>
    </source>
</evidence>
<accession>Q2RGX6</accession>
<comment type="function">
    <text evidence="1">Catalyzes the phosphorylation of the hydroxyl group of 4-methyl-5-beta-hydroxyethylthiazole (THZ).</text>
</comment>
<comment type="catalytic activity">
    <reaction evidence="1">
        <text>5-(2-hydroxyethyl)-4-methylthiazole + ATP = 4-methyl-5-(2-phosphooxyethyl)-thiazole + ADP + H(+)</text>
        <dbReference type="Rhea" id="RHEA:24212"/>
        <dbReference type="ChEBI" id="CHEBI:15378"/>
        <dbReference type="ChEBI" id="CHEBI:17957"/>
        <dbReference type="ChEBI" id="CHEBI:30616"/>
        <dbReference type="ChEBI" id="CHEBI:58296"/>
        <dbReference type="ChEBI" id="CHEBI:456216"/>
        <dbReference type="EC" id="2.7.1.50"/>
    </reaction>
</comment>
<comment type="cofactor">
    <cofactor evidence="1">
        <name>Mg(2+)</name>
        <dbReference type="ChEBI" id="CHEBI:18420"/>
    </cofactor>
</comment>
<comment type="pathway">
    <text evidence="1">Cofactor biosynthesis; thiamine diphosphate biosynthesis; 4-methyl-5-(2-phosphoethyl)-thiazole from 5-(2-hydroxyethyl)-4-methylthiazole: step 1/1.</text>
</comment>
<comment type="similarity">
    <text evidence="1">Belongs to the Thz kinase family.</text>
</comment>
<gene>
    <name evidence="1" type="primary">thiM</name>
    <name type="ordered locus">Moth_2017</name>
</gene>